<comment type="function">
    <text evidence="1">Core subunit of the mitochondrial membrane respiratory chain NADH dehydrogenase (Complex I) which catalyzes electron transfer from NADH through the respiratory chain, using ubiquinone as an electron acceptor. Essential for the catalytic activity and assembly of complex I.</text>
</comment>
<comment type="catalytic activity">
    <reaction evidence="1">
        <text>a ubiquinone + NADH + 5 H(+)(in) = a ubiquinol + NAD(+) + 4 H(+)(out)</text>
        <dbReference type="Rhea" id="RHEA:29091"/>
        <dbReference type="Rhea" id="RHEA-COMP:9565"/>
        <dbReference type="Rhea" id="RHEA-COMP:9566"/>
        <dbReference type="ChEBI" id="CHEBI:15378"/>
        <dbReference type="ChEBI" id="CHEBI:16389"/>
        <dbReference type="ChEBI" id="CHEBI:17976"/>
        <dbReference type="ChEBI" id="CHEBI:57540"/>
        <dbReference type="ChEBI" id="CHEBI:57945"/>
        <dbReference type="EC" id="7.1.1.2"/>
    </reaction>
</comment>
<comment type="subunit">
    <text evidence="2">Core subunit of respiratory chain NADH dehydrogenase (Complex I) which is composed of 45 different subunits.</text>
</comment>
<comment type="subcellular location">
    <subcellularLocation>
        <location evidence="2">Mitochondrion inner membrane</location>
        <topology evidence="3">Multi-pass membrane protein</topology>
    </subcellularLocation>
</comment>
<comment type="similarity">
    <text evidence="4">Belongs to the complex I subunit 1 family.</text>
</comment>
<geneLocation type="mitochondrion"/>
<name>NU1M_SARHA</name>
<organism>
    <name type="scientific">Sarcophilus harrisii</name>
    <name type="common">Tasmanian devil</name>
    <name type="synonym">Sarcophilus laniarius</name>
    <dbReference type="NCBI Taxonomy" id="9305"/>
    <lineage>
        <taxon>Eukaryota</taxon>
        <taxon>Metazoa</taxon>
        <taxon>Chordata</taxon>
        <taxon>Craniata</taxon>
        <taxon>Vertebrata</taxon>
        <taxon>Euteleostomi</taxon>
        <taxon>Mammalia</taxon>
        <taxon>Metatheria</taxon>
        <taxon>Dasyuromorphia</taxon>
        <taxon>Dasyuridae</taxon>
        <taxon>Sarcophilus</taxon>
    </lineage>
</organism>
<dbReference type="EC" id="7.1.1.2" evidence="1"/>
<dbReference type="EMBL" id="AB011228">
    <property type="protein sequence ID" value="BAA32120.1"/>
    <property type="molecule type" value="Genomic_DNA"/>
</dbReference>
<dbReference type="SMR" id="O78711"/>
<dbReference type="FunCoup" id="O78711">
    <property type="interactions" value="530"/>
</dbReference>
<dbReference type="STRING" id="9305.ENSSHAP00000022392"/>
<dbReference type="eggNOG" id="KOG4770">
    <property type="taxonomic scope" value="Eukaryota"/>
</dbReference>
<dbReference type="InParanoid" id="O78711"/>
<dbReference type="Proteomes" id="UP000007648">
    <property type="component" value="Unassembled WGS sequence"/>
</dbReference>
<dbReference type="GO" id="GO:0005743">
    <property type="term" value="C:mitochondrial inner membrane"/>
    <property type="evidence" value="ECO:0000250"/>
    <property type="project" value="UniProtKB"/>
</dbReference>
<dbReference type="GO" id="GO:0008137">
    <property type="term" value="F:NADH dehydrogenase (ubiquinone) activity"/>
    <property type="evidence" value="ECO:0000250"/>
    <property type="project" value="UniProtKB"/>
</dbReference>
<dbReference type="GO" id="GO:0006120">
    <property type="term" value="P:mitochondrial electron transport, NADH to ubiquinone"/>
    <property type="evidence" value="ECO:0000250"/>
    <property type="project" value="UniProtKB"/>
</dbReference>
<dbReference type="GO" id="GO:0032981">
    <property type="term" value="P:mitochondrial respiratory chain complex I assembly"/>
    <property type="evidence" value="ECO:0000250"/>
    <property type="project" value="UniProtKB"/>
</dbReference>
<dbReference type="HAMAP" id="MF_01350">
    <property type="entry name" value="NDH1_NuoH"/>
    <property type="match status" value="1"/>
</dbReference>
<dbReference type="InterPro" id="IPR001694">
    <property type="entry name" value="NADH_UbQ_OxRdtase_su1/FPO"/>
</dbReference>
<dbReference type="InterPro" id="IPR018086">
    <property type="entry name" value="NADH_UbQ_OxRdtase_su1_CS"/>
</dbReference>
<dbReference type="PANTHER" id="PTHR11432">
    <property type="entry name" value="NADH DEHYDROGENASE SUBUNIT 1"/>
    <property type="match status" value="1"/>
</dbReference>
<dbReference type="PANTHER" id="PTHR11432:SF3">
    <property type="entry name" value="NADH-UBIQUINONE OXIDOREDUCTASE CHAIN 1"/>
    <property type="match status" value="1"/>
</dbReference>
<dbReference type="Pfam" id="PF00146">
    <property type="entry name" value="NADHdh"/>
    <property type="match status" value="1"/>
</dbReference>
<dbReference type="PROSITE" id="PS00667">
    <property type="entry name" value="COMPLEX1_ND1_1"/>
    <property type="match status" value="1"/>
</dbReference>
<dbReference type="PROSITE" id="PS00668">
    <property type="entry name" value="COMPLEX1_ND1_2"/>
    <property type="match status" value="1"/>
</dbReference>
<accession>O78711</accession>
<gene>
    <name type="primary">MT-ND1</name>
    <name type="synonym">MTND1</name>
    <name type="synonym">NADH1</name>
    <name type="synonym">ND1</name>
</gene>
<proteinExistence type="inferred from homology"/>
<sequence length="318" mass="35725">MFTINLLLYIIPILLAVAFLTLIERKVLGYMQFRKGPNMVGPYGLLQPFADAVKLFTKEPLHPLTSSTSMFIIAPILALSIALTIWTPLPMPNTLLDLNLGLIFILSLSGLSVYSILWSGWASNSKYALIGALRAVAQTISYEVSLAIILLSIMLINGSFTLKTMSVTQENFWLIITTWPLAMMWYISTLAETNRAPFDLTEGESELVSGFNVEYAAGPFAMFFLAEYANIIAMNAITTILFLGPSLMPNLSHLNTMSFMTKTLLLTMTFLWVRASYPRFRYDQLMHLLWKNFLPMTLAMCLWFISLPIALSCIPPQM</sequence>
<evidence type="ECO:0000250" key="1">
    <source>
        <dbReference type="UniProtKB" id="P03886"/>
    </source>
</evidence>
<evidence type="ECO:0000250" key="2">
    <source>
        <dbReference type="UniProtKB" id="P03887"/>
    </source>
</evidence>
<evidence type="ECO:0000255" key="3"/>
<evidence type="ECO:0000305" key="4"/>
<keyword id="KW-0249">Electron transport</keyword>
<keyword id="KW-0472">Membrane</keyword>
<keyword id="KW-0496">Mitochondrion</keyword>
<keyword id="KW-0999">Mitochondrion inner membrane</keyword>
<keyword id="KW-0520">NAD</keyword>
<keyword id="KW-1185">Reference proteome</keyword>
<keyword id="KW-0679">Respiratory chain</keyword>
<keyword id="KW-1278">Translocase</keyword>
<keyword id="KW-0812">Transmembrane</keyword>
<keyword id="KW-1133">Transmembrane helix</keyword>
<keyword id="KW-0813">Transport</keyword>
<keyword id="KW-0830">Ubiquinone</keyword>
<protein>
    <recommendedName>
        <fullName>NADH-ubiquinone oxidoreductase chain 1</fullName>
        <ecNumber evidence="1">7.1.1.2</ecNumber>
    </recommendedName>
    <alternativeName>
        <fullName>NADH dehydrogenase subunit 1</fullName>
    </alternativeName>
</protein>
<reference key="1">
    <citation type="journal article" date="1998" name="J. Mol. Evol.">
        <title>Conflict among individual mitochondrial proteins in resolving the phylogeny of eutherian orders.</title>
        <authorList>
            <person name="Cao Y."/>
            <person name="Janke A."/>
            <person name="Waddell P.J."/>
            <person name="Westerman M."/>
            <person name="Takenaka O."/>
            <person name="Murata S."/>
            <person name="Okada N."/>
            <person name="Paeaebo S."/>
            <person name="Hasegawa M."/>
        </authorList>
    </citation>
    <scope>NUCLEOTIDE SEQUENCE [GENOMIC DNA]</scope>
    <source>
        <tissue>Liver</tissue>
    </source>
</reference>
<feature type="chain" id="PRO_0000117474" description="NADH-ubiquinone oxidoreductase chain 1">
    <location>
        <begin position="1"/>
        <end position="318"/>
    </location>
</feature>
<feature type="transmembrane region" description="Helical" evidence="3">
    <location>
        <begin position="3"/>
        <end position="23"/>
    </location>
</feature>
<feature type="transmembrane region" description="Helical" evidence="3">
    <location>
        <begin position="70"/>
        <end position="90"/>
    </location>
</feature>
<feature type="transmembrane region" description="Helical" evidence="3">
    <location>
        <begin position="100"/>
        <end position="120"/>
    </location>
</feature>
<feature type="transmembrane region" description="Helical" evidence="3">
    <location>
        <begin position="136"/>
        <end position="156"/>
    </location>
</feature>
<feature type="transmembrane region" description="Helical" evidence="3">
    <location>
        <begin position="172"/>
        <end position="192"/>
    </location>
</feature>
<feature type="transmembrane region" description="Helical" evidence="3">
    <location>
        <begin position="223"/>
        <end position="243"/>
    </location>
</feature>
<feature type="transmembrane region" description="Helical" evidence="3">
    <location>
        <begin position="251"/>
        <end position="273"/>
    </location>
</feature>
<feature type="transmembrane region" description="Helical" evidence="3">
    <location>
        <begin position="294"/>
        <end position="314"/>
    </location>
</feature>